<dbReference type="EMBL" id="M81362">
    <property type="protein sequence ID" value="AAA35406.1"/>
    <property type="status" value="ALT_SEQ"/>
    <property type="molecule type" value="Genomic_DNA"/>
</dbReference>
<dbReference type="PIR" id="I36934">
    <property type="entry name" value="I36934"/>
</dbReference>
<dbReference type="SMR" id="Q28775"/>
<dbReference type="STRING" id="9597.ENSPPAP00000031159"/>
<dbReference type="eggNOG" id="KOG3378">
    <property type="taxonomic scope" value="Eukaryota"/>
</dbReference>
<dbReference type="Proteomes" id="UP000240080">
    <property type="component" value="Unplaced"/>
</dbReference>
<dbReference type="GO" id="GO:0072562">
    <property type="term" value="C:blood microparticle"/>
    <property type="evidence" value="ECO:0007669"/>
    <property type="project" value="TreeGrafter"/>
</dbReference>
<dbReference type="GO" id="GO:0031838">
    <property type="term" value="C:haptoglobin-hemoglobin complex"/>
    <property type="evidence" value="ECO:0007669"/>
    <property type="project" value="TreeGrafter"/>
</dbReference>
<dbReference type="GO" id="GO:0005833">
    <property type="term" value="C:hemoglobin complex"/>
    <property type="evidence" value="ECO:0007669"/>
    <property type="project" value="InterPro"/>
</dbReference>
<dbReference type="GO" id="GO:0031720">
    <property type="term" value="F:haptoglobin binding"/>
    <property type="evidence" value="ECO:0007669"/>
    <property type="project" value="TreeGrafter"/>
</dbReference>
<dbReference type="GO" id="GO:0020037">
    <property type="term" value="F:heme binding"/>
    <property type="evidence" value="ECO:0007669"/>
    <property type="project" value="InterPro"/>
</dbReference>
<dbReference type="GO" id="GO:0031721">
    <property type="term" value="F:hemoglobin alpha binding"/>
    <property type="evidence" value="ECO:0007669"/>
    <property type="project" value="TreeGrafter"/>
</dbReference>
<dbReference type="GO" id="GO:0046872">
    <property type="term" value="F:metal ion binding"/>
    <property type="evidence" value="ECO:0007669"/>
    <property type="project" value="UniProtKB-KW"/>
</dbReference>
<dbReference type="GO" id="GO:0043177">
    <property type="term" value="F:organic acid binding"/>
    <property type="evidence" value="ECO:0007669"/>
    <property type="project" value="TreeGrafter"/>
</dbReference>
<dbReference type="GO" id="GO:0019825">
    <property type="term" value="F:oxygen binding"/>
    <property type="evidence" value="ECO:0007669"/>
    <property type="project" value="InterPro"/>
</dbReference>
<dbReference type="GO" id="GO:0005344">
    <property type="term" value="F:oxygen carrier activity"/>
    <property type="evidence" value="ECO:0007669"/>
    <property type="project" value="UniProtKB-KW"/>
</dbReference>
<dbReference type="GO" id="GO:0004601">
    <property type="term" value="F:peroxidase activity"/>
    <property type="evidence" value="ECO:0007669"/>
    <property type="project" value="TreeGrafter"/>
</dbReference>
<dbReference type="GO" id="GO:0042744">
    <property type="term" value="P:hydrogen peroxide catabolic process"/>
    <property type="evidence" value="ECO:0007669"/>
    <property type="project" value="TreeGrafter"/>
</dbReference>
<dbReference type="CDD" id="cd08925">
    <property type="entry name" value="Hb-beta-like"/>
    <property type="match status" value="1"/>
</dbReference>
<dbReference type="FunFam" id="1.10.490.10:FF:000001">
    <property type="entry name" value="Hemoglobin subunit beta"/>
    <property type="match status" value="1"/>
</dbReference>
<dbReference type="Gene3D" id="1.10.490.10">
    <property type="entry name" value="Globins"/>
    <property type="match status" value="1"/>
</dbReference>
<dbReference type="InterPro" id="IPR000971">
    <property type="entry name" value="Globin"/>
</dbReference>
<dbReference type="InterPro" id="IPR009050">
    <property type="entry name" value="Globin-like_sf"/>
</dbReference>
<dbReference type="InterPro" id="IPR012292">
    <property type="entry name" value="Globin/Proto"/>
</dbReference>
<dbReference type="InterPro" id="IPR002337">
    <property type="entry name" value="Hemoglobin_b"/>
</dbReference>
<dbReference type="InterPro" id="IPR050056">
    <property type="entry name" value="Hemoglobin_oxygen_transport"/>
</dbReference>
<dbReference type="PANTHER" id="PTHR11442">
    <property type="entry name" value="HEMOGLOBIN FAMILY MEMBER"/>
    <property type="match status" value="1"/>
</dbReference>
<dbReference type="PANTHER" id="PTHR11442:SF7">
    <property type="entry name" value="HEMOGLOBIN SUBUNIT EPSILON"/>
    <property type="match status" value="1"/>
</dbReference>
<dbReference type="Pfam" id="PF00042">
    <property type="entry name" value="Globin"/>
    <property type="match status" value="1"/>
</dbReference>
<dbReference type="PRINTS" id="PR00814">
    <property type="entry name" value="BETAHAEM"/>
</dbReference>
<dbReference type="SUPFAM" id="SSF46458">
    <property type="entry name" value="Globin-like"/>
    <property type="match status" value="1"/>
</dbReference>
<dbReference type="PROSITE" id="PS01033">
    <property type="entry name" value="GLOBIN"/>
    <property type="match status" value="1"/>
</dbReference>
<name>HBE_PANPA</name>
<proteinExistence type="evidence at transcript level"/>
<comment type="function">
    <text>The epsilon chain is a beta-type chain of early mammalian embryonic hemoglobin.</text>
</comment>
<comment type="subunit">
    <text>Heterotetramer of two alpha chains and two epsilon chains in early embryonic hemoglobin Gower-2; two zeta chains and two epsilon chains in early embryonic hemoglobin Gower-1.</text>
</comment>
<comment type="tissue specificity">
    <text>Red blood cells.</text>
</comment>
<comment type="similarity">
    <text evidence="2">Belongs to the globin family.</text>
</comment>
<feature type="chain" id="PRO_0000053220" description="Hemoglobin subunit epsilon">
    <location>
        <begin position="1"/>
        <end position="147"/>
    </location>
</feature>
<feature type="domain" description="Globin" evidence="2">
    <location>
        <begin position="3"/>
        <end position="147"/>
    </location>
</feature>
<feature type="binding site" description="distal binding residue" evidence="2">
    <location>
        <position position="64"/>
    </location>
    <ligand>
        <name>heme b</name>
        <dbReference type="ChEBI" id="CHEBI:60344"/>
    </ligand>
    <ligandPart>
        <name>Fe</name>
        <dbReference type="ChEBI" id="CHEBI:18248"/>
    </ligandPart>
</feature>
<feature type="binding site" description="proximal binding residue" evidence="2">
    <location>
        <position position="93"/>
    </location>
    <ligand>
        <name>heme b</name>
        <dbReference type="ChEBI" id="CHEBI:60344"/>
    </ligand>
    <ligandPart>
        <name>Fe</name>
        <dbReference type="ChEBI" id="CHEBI:18248"/>
    </ligandPart>
</feature>
<feature type="modified residue" description="Phosphoserine" evidence="1">
    <location>
        <position position="14"/>
    </location>
</feature>
<feature type="modified residue" description="Phosphoserine" evidence="1">
    <location>
        <position position="51"/>
    </location>
</feature>
<accession>Q28775</accession>
<protein>
    <recommendedName>
        <fullName>Hemoglobin subunit epsilon</fullName>
    </recommendedName>
    <alternativeName>
        <fullName>Epsilon-globin</fullName>
    </alternativeName>
    <alternativeName>
        <fullName>Hemoglobin epsilon chain</fullName>
    </alternativeName>
</protein>
<organism>
    <name type="scientific">Pan paniscus</name>
    <name type="common">Pygmy chimpanzee</name>
    <name type="synonym">Bonobo</name>
    <dbReference type="NCBI Taxonomy" id="9597"/>
    <lineage>
        <taxon>Eukaryota</taxon>
        <taxon>Metazoa</taxon>
        <taxon>Chordata</taxon>
        <taxon>Craniata</taxon>
        <taxon>Vertebrata</taxon>
        <taxon>Euteleostomi</taxon>
        <taxon>Mammalia</taxon>
        <taxon>Eutheria</taxon>
        <taxon>Euarchontoglires</taxon>
        <taxon>Primates</taxon>
        <taxon>Haplorrhini</taxon>
        <taxon>Catarrhini</taxon>
        <taxon>Hominidae</taxon>
        <taxon>Pan</taxon>
    </lineage>
</organism>
<gene>
    <name type="primary">HBE1</name>
</gene>
<keyword id="KW-0349">Heme</keyword>
<keyword id="KW-0408">Iron</keyword>
<keyword id="KW-0479">Metal-binding</keyword>
<keyword id="KW-0561">Oxygen transport</keyword>
<keyword id="KW-0597">Phosphoprotein</keyword>
<keyword id="KW-1185">Reference proteome</keyword>
<keyword id="KW-0813">Transport</keyword>
<evidence type="ECO:0000250" key="1">
    <source>
        <dbReference type="UniProtKB" id="P02100"/>
    </source>
</evidence>
<evidence type="ECO:0000255" key="2">
    <source>
        <dbReference type="PROSITE-ProRule" id="PRU00238"/>
    </source>
</evidence>
<sequence>MVHFTAEEKAAVTSLWSKMNVEEAGGEALGRLLIVYPWTQRFFDSFGNLSSPSAILGNPKVKAHGKKVLTSFGDAIKNMDNLKPAFAKLSELHCDKLHVDPENFKLLGNVMVIILATHFGKEFTPEVQAAWQKLVSAVAIALAHKYH</sequence>
<reference key="1">
    <citation type="journal article" date="1992" name="Science">
        <title>Rejection of the 'flying primate' hypothesis by phylogenetic evidence from the epsilon-globin gene.</title>
        <authorList>
            <person name="Bailey W.J."/>
            <person name="Slightom J.L."/>
            <person name="Goodman M."/>
        </authorList>
    </citation>
    <scope>NUCLEOTIDE SEQUENCE [GENOMIC DNA]</scope>
</reference>
<reference key="2">
    <citation type="journal article" date="1993" name="Science">
        <authorList>
            <person name="Bailey W.J."/>
            <person name="Slightom J.L."/>
            <person name="Goodman M."/>
        </authorList>
    </citation>
    <scope>ERRATUM OF PUBMED:1301735</scope>
</reference>